<organism>
    <name type="scientific">Nostoc sp. (strain PCC 7120 / SAG 25.82 / UTEX 2576)</name>
    <dbReference type="NCBI Taxonomy" id="103690"/>
    <lineage>
        <taxon>Bacteria</taxon>
        <taxon>Bacillati</taxon>
        <taxon>Cyanobacteriota</taxon>
        <taxon>Cyanophyceae</taxon>
        <taxon>Nostocales</taxon>
        <taxon>Nostocaceae</taxon>
        <taxon>Nostoc</taxon>
    </lineage>
</organism>
<name>NIFD_NOSS1</name>
<dbReference type="EC" id="1.18.6.1"/>
<dbReference type="EMBL" id="V01482">
    <property type="protein sequence ID" value="CAA24730.1"/>
    <property type="molecule type" value="Genomic_DNA"/>
</dbReference>
<dbReference type="EMBL" id="BA000019">
    <property type="protein sequence ID" value="BAB73398.1"/>
    <property type="molecule type" value="Genomic_DNA"/>
</dbReference>
<dbReference type="PIR" id="A00542">
    <property type="entry name" value="NIAIMA"/>
</dbReference>
<dbReference type="PIR" id="AF1986">
    <property type="entry name" value="AF1986"/>
</dbReference>
<dbReference type="SMR" id="P00464"/>
<dbReference type="STRING" id="103690.gene:10493456"/>
<dbReference type="KEGG" id="ana:all1454"/>
<dbReference type="eggNOG" id="COG2710">
    <property type="taxonomic scope" value="Bacteria"/>
</dbReference>
<dbReference type="Proteomes" id="UP000002483">
    <property type="component" value="Chromosome"/>
</dbReference>
<dbReference type="GO" id="GO:0016612">
    <property type="term" value="C:molybdenum-iron nitrogenase complex"/>
    <property type="evidence" value="ECO:0007669"/>
    <property type="project" value="InterPro"/>
</dbReference>
<dbReference type="GO" id="GO:0005524">
    <property type="term" value="F:ATP binding"/>
    <property type="evidence" value="ECO:0007669"/>
    <property type="project" value="UniProtKB-KW"/>
</dbReference>
<dbReference type="GO" id="GO:0051536">
    <property type="term" value="F:iron-sulfur cluster binding"/>
    <property type="evidence" value="ECO:0007669"/>
    <property type="project" value="UniProtKB-KW"/>
</dbReference>
<dbReference type="GO" id="GO:0046872">
    <property type="term" value="F:metal ion binding"/>
    <property type="evidence" value="ECO:0007669"/>
    <property type="project" value="UniProtKB-KW"/>
</dbReference>
<dbReference type="GO" id="GO:0016163">
    <property type="term" value="F:nitrogenase activity"/>
    <property type="evidence" value="ECO:0007669"/>
    <property type="project" value="UniProtKB-EC"/>
</dbReference>
<dbReference type="GO" id="GO:0009399">
    <property type="term" value="P:nitrogen fixation"/>
    <property type="evidence" value="ECO:0007669"/>
    <property type="project" value="UniProtKB-KW"/>
</dbReference>
<dbReference type="CDD" id="cd01976">
    <property type="entry name" value="Nitrogenase_MoFe_alpha"/>
    <property type="match status" value="1"/>
</dbReference>
<dbReference type="Gene3D" id="3.40.50.1980">
    <property type="entry name" value="Nitrogenase molybdenum iron protein domain"/>
    <property type="match status" value="3"/>
</dbReference>
<dbReference type="InterPro" id="IPR000510">
    <property type="entry name" value="Nase/OxRdtase_comp1"/>
</dbReference>
<dbReference type="InterPro" id="IPR010143">
    <property type="entry name" value="Nase_comp1_asu"/>
</dbReference>
<dbReference type="InterPro" id="IPR000318">
    <property type="entry name" value="Nase_comp1_CS"/>
</dbReference>
<dbReference type="InterPro" id="IPR005972">
    <property type="entry name" value="Nase_Mo-Fe_asu"/>
</dbReference>
<dbReference type="NCBIfam" id="TIGR01862">
    <property type="entry name" value="N2-ase-Ialpha"/>
    <property type="match status" value="1"/>
</dbReference>
<dbReference type="NCBIfam" id="TIGR01282">
    <property type="entry name" value="nifD"/>
    <property type="match status" value="1"/>
</dbReference>
<dbReference type="PANTHER" id="PTHR43457">
    <property type="entry name" value="NITROGENASE MOLYBDENUM-IRON PROTEIN ALPHA CHAIN"/>
    <property type="match status" value="1"/>
</dbReference>
<dbReference type="PANTHER" id="PTHR43457:SF1">
    <property type="entry name" value="NITROGENASE MOLYBDENUM-IRON PROTEIN ALPHA CHAIN"/>
    <property type="match status" value="1"/>
</dbReference>
<dbReference type="Pfam" id="PF00148">
    <property type="entry name" value="Oxidored_nitro"/>
    <property type="match status" value="1"/>
</dbReference>
<dbReference type="SUPFAM" id="SSF53807">
    <property type="entry name" value="Helical backbone' metal receptor"/>
    <property type="match status" value="1"/>
</dbReference>
<dbReference type="PROSITE" id="PS00699">
    <property type="entry name" value="NITROGENASE_1_1"/>
    <property type="match status" value="1"/>
</dbReference>
<dbReference type="PROSITE" id="PS00090">
    <property type="entry name" value="NITROGENASE_1_2"/>
    <property type="match status" value="1"/>
</dbReference>
<sequence>MTPPENKNLVDENKELIQEVLKAYPEKSRKKREKHLNVHEENKSDCGVKSNIKSVPGVMTARGCAYAGSKGVVWGPIKDMIHISHGPVGCGYWSWSGRRNYYVGVTGINSFGTMHFTSDFQERDIVFGGDKKLTKLIEELDVLFPLNRGVSIQSECPIGLIGDDIEAVAKKTSKQIGKPVVPLRCEGFRGVSQSLGHHIANDAIRDWIFPEYDKLKKENRLDFEPSPYDVALIGDYNIGGDAWASRMLLEEMGLRVVAQWSGDGTLNELIQGPAAKLVLIHCYRSMNYICRSLEEQYGMPWMEFNFFGPTKIAASLREIAAKFDSKIQENAEKVIAKYTPVMNAVLDKYRPRLEGNTVMLYVGGLRPRHVVPAFEDLGIKVVGTGYEFAHNDDYKRTTHYIDNATIIYDDVTAYEFEEFVKAKKPDLIASGIKEKYVFQKMGLPFRQMHSWDYSGPYHGYDGFAIFARDMDLALNSPTWSLIGAPWKKAAAKAKAAA</sequence>
<feature type="chain" id="PRO_0000153053" description="Nitrogenase molybdenum-iron protein alpha chain">
    <location>
        <begin position="1"/>
        <end position="497"/>
    </location>
</feature>
<feature type="binding site" evidence="1">
    <location>
        <position position="64"/>
    </location>
    <ligand>
        <name>[8Fe-7S] cluster</name>
        <dbReference type="ChEBI" id="CHEBI:21143"/>
        <note>ligand shared with beta chain</note>
    </ligand>
</feature>
<feature type="binding site" evidence="1">
    <location>
        <position position="90"/>
    </location>
    <ligand>
        <name>[8Fe-7S] cluster</name>
        <dbReference type="ChEBI" id="CHEBI:21143"/>
        <note>ligand shared with beta chain</note>
    </ligand>
</feature>
<feature type="binding site" evidence="1">
    <location>
        <position position="156"/>
    </location>
    <ligand>
        <name>[8Fe-7S] cluster</name>
        <dbReference type="ChEBI" id="CHEBI:21143"/>
        <note>ligand shared with beta chain</note>
    </ligand>
</feature>
<feature type="binding site" evidence="1">
    <location>
        <position position="282"/>
    </location>
    <ligand>
        <name>[7Fe-Mo-9S-C-homocitryl] cluster</name>
        <dbReference type="ChEBI" id="CHEBI:30409"/>
    </ligand>
</feature>
<feature type="binding site" evidence="1">
    <location>
        <position position="449"/>
    </location>
    <ligand>
        <name>[7Fe-Mo-9S-C-homocitryl] cluster</name>
        <dbReference type="ChEBI" id="CHEBI:30409"/>
    </ligand>
</feature>
<feature type="sequence conflict" description="In Ref. 1; CAA24730." evidence="2" ref="1">
    <original>L</original>
    <variation>S</variation>
    <location>
        <position position="160"/>
    </location>
</feature>
<feature type="sequence conflict" description="In Ref. 1; CAA24730." evidence="2" ref="1">
    <original>N</original>
    <variation>T</variation>
    <location>
        <position position="219"/>
    </location>
</feature>
<feature type="sequence conflict" description="In Ref. 1." evidence="2" ref="1">
    <original>GPYHGYDGFAIFARDMDLALNSPTWSLIGAPWKKAAAKAKAA</original>
    <variation>ELGDGVQMSDEVRFFCEGRKKSLFL</variation>
    <location>
        <begin position="455"/>
        <end position="496"/>
    </location>
</feature>
<reference key="1">
    <citation type="journal article" date="1983" name="Proc. Natl. Acad. Sci. U.S.A.">
        <title>Sequence of the nifD gene coding for the alpha subunit of dinitrogenase from the cyanobacterium Anabaena.</title>
        <authorList>
            <person name="Lammers P.J."/>
            <person name="Haselkorn R."/>
        </authorList>
    </citation>
    <scope>NUCLEOTIDE SEQUENCE [GENOMIC DNA]</scope>
</reference>
<reference key="2">
    <citation type="journal article" date="2001" name="DNA Res.">
        <title>Complete genomic sequence of the filamentous nitrogen-fixing cyanobacterium Anabaena sp. strain PCC 7120.</title>
        <authorList>
            <person name="Kaneko T."/>
            <person name="Nakamura Y."/>
            <person name="Wolk C.P."/>
            <person name="Kuritz T."/>
            <person name="Sasamoto S."/>
            <person name="Watanabe A."/>
            <person name="Iriguchi M."/>
            <person name="Ishikawa A."/>
            <person name="Kawashima K."/>
            <person name="Kimura T."/>
            <person name="Kishida Y."/>
            <person name="Kohara M."/>
            <person name="Matsumoto M."/>
            <person name="Matsuno A."/>
            <person name="Muraki A."/>
            <person name="Nakazaki N."/>
            <person name="Shimpo S."/>
            <person name="Sugimoto M."/>
            <person name="Takazawa M."/>
            <person name="Yamada M."/>
            <person name="Yasuda M."/>
            <person name="Tabata S."/>
        </authorList>
    </citation>
    <scope>NUCLEOTIDE SEQUENCE [LARGE SCALE GENOMIC DNA]</scope>
    <source>
        <strain>PCC 7120 / SAG 25.82 / UTEX 2576</strain>
    </source>
</reference>
<protein>
    <recommendedName>
        <fullName>Nitrogenase molybdenum-iron protein alpha chain</fullName>
        <ecNumber>1.18.6.1</ecNumber>
    </recommendedName>
    <alternativeName>
        <fullName>Dinitrogenase</fullName>
    </alternativeName>
    <alternativeName>
        <fullName>Nitrogenase component I</fullName>
    </alternativeName>
</protein>
<keyword id="KW-0067">ATP-binding</keyword>
<keyword id="KW-0408">Iron</keyword>
<keyword id="KW-0411">Iron-sulfur</keyword>
<keyword id="KW-0479">Metal-binding</keyword>
<keyword id="KW-0500">Molybdenum</keyword>
<keyword id="KW-0535">Nitrogen fixation</keyword>
<keyword id="KW-0547">Nucleotide-binding</keyword>
<keyword id="KW-0560">Oxidoreductase</keyword>
<keyword id="KW-1185">Reference proteome</keyword>
<proteinExistence type="inferred from homology"/>
<accession>P00464</accession>
<gene>
    <name type="primary">nifD</name>
    <name type="ordered locus">all1454</name>
</gene>
<evidence type="ECO:0000250" key="1"/>
<evidence type="ECO:0000305" key="2"/>
<comment type="function">
    <text>This molybdenum-iron protein is part of the nitrogenase complex that catalyzes the key enzymatic reactions in nitrogen fixation.</text>
</comment>
<comment type="catalytic activity">
    <reaction>
        <text>N2 + 8 reduced [2Fe-2S]-[ferredoxin] + 16 ATP + 16 H2O = H2 + 8 oxidized [2Fe-2S]-[ferredoxin] + 2 NH4(+) + 16 ADP + 16 phosphate + 6 H(+)</text>
        <dbReference type="Rhea" id="RHEA:21448"/>
        <dbReference type="Rhea" id="RHEA-COMP:10000"/>
        <dbReference type="Rhea" id="RHEA-COMP:10001"/>
        <dbReference type="ChEBI" id="CHEBI:15377"/>
        <dbReference type="ChEBI" id="CHEBI:15378"/>
        <dbReference type="ChEBI" id="CHEBI:17997"/>
        <dbReference type="ChEBI" id="CHEBI:18276"/>
        <dbReference type="ChEBI" id="CHEBI:28938"/>
        <dbReference type="ChEBI" id="CHEBI:30616"/>
        <dbReference type="ChEBI" id="CHEBI:33737"/>
        <dbReference type="ChEBI" id="CHEBI:33738"/>
        <dbReference type="ChEBI" id="CHEBI:43474"/>
        <dbReference type="ChEBI" id="CHEBI:456216"/>
        <dbReference type="EC" id="1.18.6.1"/>
    </reaction>
</comment>
<comment type="cofactor">
    <cofactor evidence="1">
        <name>[8Fe-7S] cluster</name>
        <dbReference type="ChEBI" id="CHEBI:21143"/>
    </cofactor>
    <text evidence="1">Binds 1 [8Fe-7S] cluster per heterodimer.</text>
</comment>
<comment type="cofactor">
    <cofactor evidence="1">
        <name>[7Fe-Mo-9S-C-homocitryl] cluster</name>
        <dbReference type="ChEBI" id="CHEBI:30409"/>
    </cofactor>
    <text evidence="1">Binds 1 [7Fe-Mo-9S-C-homocitryl] cluster per subunit.</text>
</comment>
<comment type="subunit">
    <text>Tetramer of two alpha and two beta chains. Forms complex with the iron protein (nitrogenase component 2).</text>
</comment>
<comment type="similarity">
    <text evidence="2">Belongs to the NifD/NifK/NifE/NifN family.</text>
</comment>